<evidence type="ECO:0000255" key="1">
    <source>
        <dbReference type="PROSITE-ProRule" id="PRU01246"/>
    </source>
</evidence>
<evidence type="ECO:0000255" key="2">
    <source>
        <dbReference type="PROSITE-ProRule" id="PRU01248"/>
    </source>
</evidence>
<evidence type="ECO:0000305" key="3"/>
<feature type="chain" id="PRO_0000391802" description="Virulence plasmid integrase pGP7-D">
    <location>
        <begin position="1"/>
        <end position="305"/>
    </location>
</feature>
<feature type="domain" description="Core-binding (CB)" evidence="2">
    <location>
        <begin position="13"/>
        <end position="99"/>
    </location>
</feature>
<feature type="domain" description="Tyr recombinase" evidence="1">
    <location>
        <begin position="127"/>
        <end position="305"/>
    </location>
</feature>
<feature type="active site" evidence="1">
    <location>
        <position position="188"/>
    </location>
</feature>
<feature type="active site" evidence="1">
    <location>
        <position position="257"/>
    </location>
</feature>
<feature type="active site" description="O-(3'-phospho-DNA)-tyrosine intermediate" evidence="1">
    <location>
        <position position="289"/>
    </location>
</feature>
<accession>B0BCM5</accession>
<accession>P10561</accession>
<accession>Q46427</accession>
<reference key="1">
    <citation type="journal article" date="1988" name="Mol. Microbiol.">
        <title>The structure of a plasmid of Chlamydia trachomatis believed to be required for growth within mammalian cells.</title>
        <authorList>
            <person name="Comanducci M."/>
            <person name="Ricci S."/>
            <person name="Ratti G."/>
        </authorList>
    </citation>
    <scope>NUCLEOTIDE SEQUENCE [GENOMIC DNA]</scope>
    <source>
        <plasmid>pLGV440</plasmid>
    </source>
</reference>
<reference key="2">
    <citation type="journal article" date="2008" name="Genome Res.">
        <title>Chlamydia trachomatis: genome sequence analysis of lymphogranuloma venereum isolates.</title>
        <authorList>
            <person name="Thomson N.R."/>
            <person name="Holden M.T.G."/>
            <person name="Carder C."/>
            <person name="Lennard N."/>
            <person name="Lockey S.J."/>
            <person name="Marsh P."/>
            <person name="Skipp P."/>
            <person name="O'Connor C.D."/>
            <person name="Goodhead I."/>
            <person name="Norbertzcak H."/>
            <person name="Harris B."/>
            <person name="Ormond D."/>
            <person name="Rance R."/>
            <person name="Quail M.A."/>
            <person name="Parkhill J."/>
            <person name="Stephens R.S."/>
            <person name="Clarke I.N."/>
        </authorList>
    </citation>
    <scope>NUCLEOTIDE SEQUENCE [LARGE SCALE GENOMIC DNA]</scope>
    <source>
        <strain>ATCC VR-902B / DSM 19102 / 434/Bu</strain>
        <plasmid>pL2</plasmid>
    </source>
</reference>
<comment type="miscellaneous">
    <text>pGP7-D is required for growth within mammalian cells.</text>
</comment>
<comment type="similarity">
    <text evidence="3">Belongs to the 'phage' integrase family.</text>
</comment>
<comment type="sequence caution" evidence="3">
    <conflict type="frameshift">
        <sequence resource="EMBL-CDS" id="CAA30427"/>
    </conflict>
</comment>
<comment type="sequence caution" evidence="3">
    <conflict type="frameshift">
        <sequence resource="EMBL-CDS" id="CAP09063"/>
    </conflict>
</comment>
<gene>
    <name type="ordered locus">pL2-01</name>
</gene>
<sequence length="305" mass="34806">MGSMAFHKSRLFLTFGDASEIWLSTLSHLTRKNYASGINFLVSLEILDLSETLIKAISLDHSESLFKIKSLDVFNGKVVSEASKQARAACYISFTKFLYRLTKGYIKPAIPLKDFGNTTFFKIRDKIKTESISKQEWTVFFEALRIVNYRDYLIGKLIVQGIRKLDEILSLRTDDLFFASNQISFRIKKRQNKETKILITFPISLMEELQKYTCGRNGRVFVSKIGIPVTTSQVAHNFRLAEFYSAMKIKITPRVLRASALIHLKQIGLKDEEIMRISCLSSRQSVCSYCSGEEVSPLVQTPPIL</sequence>
<organism>
    <name type="scientific">Chlamydia trachomatis serovar L2 (strain ATCC VR-902B / DSM 19102 / 434/Bu)</name>
    <dbReference type="NCBI Taxonomy" id="471472"/>
    <lineage>
        <taxon>Bacteria</taxon>
        <taxon>Pseudomonadati</taxon>
        <taxon>Chlamydiota</taxon>
        <taxon>Chlamydiia</taxon>
        <taxon>Chlamydiales</taxon>
        <taxon>Chlamydiaceae</taxon>
        <taxon>Chlamydia/Chlamydophila group</taxon>
        <taxon>Chlamydia</taxon>
    </lineage>
</organism>
<proteinExistence type="inferred from homology"/>
<keyword id="KW-0229">DNA integration</keyword>
<keyword id="KW-0233">DNA recombination</keyword>
<keyword id="KW-0238">DNA-binding</keyword>
<keyword id="KW-0614">Plasmid</keyword>
<keyword id="KW-1179">Viral genome integration</keyword>
<keyword id="KW-1160">Virus entry into host cell</keyword>
<dbReference type="EMBL" id="X07547">
    <property type="protein sequence ID" value="CAA30427.1"/>
    <property type="status" value="ALT_FRAME"/>
    <property type="molecule type" value="Genomic_DNA"/>
</dbReference>
<dbReference type="EMBL" id="AM886278">
    <property type="protein sequence ID" value="CAP09063.1"/>
    <property type="status" value="ALT_FRAME"/>
    <property type="molecule type" value="Genomic_DNA"/>
</dbReference>
<dbReference type="PIR" id="S01925">
    <property type="entry name" value="S01925"/>
</dbReference>
<dbReference type="SMR" id="B0BCM5"/>
<dbReference type="GO" id="GO:0003677">
    <property type="term" value="F:DNA binding"/>
    <property type="evidence" value="ECO:0007669"/>
    <property type="project" value="UniProtKB-KW"/>
</dbReference>
<dbReference type="GO" id="GO:0015074">
    <property type="term" value="P:DNA integration"/>
    <property type="evidence" value="ECO:0007669"/>
    <property type="project" value="UniProtKB-KW"/>
</dbReference>
<dbReference type="GO" id="GO:0006310">
    <property type="term" value="P:DNA recombination"/>
    <property type="evidence" value="ECO:0007669"/>
    <property type="project" value="UniProtKB-KW"/>
</dbReference>
<dbReference type="GO" id="GO:0075713">
    <property type="term" value="P:establishment of integrated proviral latency"/>
    <property type="evidence" value="ECO:0007669"/>
    <property type="project" value="UniProtKB-KW"/>
</dbReference>
<dbReference type="GO" id="GO:0046718">
    <property type="term" value="P:symbiont entry into host cell"/>
    <property type="evidence" value="ECO:0007669"/>
    <property type="project" value="UniProtKB-KW"/>
</dbReference>
<dbReference type="GO" id="GO:0044826">
    <property type="term" value="P:viral genome integration into host DNA"/>
    <property type="evidence" value="ECO:0007669"/>
    <property type="project" value="UniProtKB-KW"/>
</dbReference>
<dbReference type="CDD" id="cd00397">
    <property type="entry name" value="DNA_BRE_C"/>
    <property type="match status" value="1"/>
</dbReference>
<dbReference type="Gene3D" id="1.10.443.10">
    <property type="entry name" value="Intergrase catalytic core"/>
    <property type="match status" value="1"/>
</dbReference>
<dbReference type="InterPro" id="IPR044068">
    <property type="entry name" value="CB"/>
</dbReference>
<dbReference type="InterPro" id="IPR011010">
    <property type="entry name" value="DNA_brk_join_enz"/>
</dbReference>
<dbReference type="InterPro" id="IPR013762">
    <property type="entry name" value="Integrase-like_cat_sf"/>
</dbReference>
<dbReference type="InterPro" id="IPR002104">
    <property type="entry name" value="Integrase_catalytic"/>
</dbReference>
<dbReference type="Pfam" id="PF00589">
    <property type="entry name" value="Phage_integrase"/>
    <property type="match status" value="1"/>
</dbReference>
<dbReference type="SUPFAM" id="SSF56349">
    <property type="entry name" value="DNA breaking-rejoining enzymes"/>
    <property type="match status" value="1"/>
</dbReference>
<dbReference type="PROSITE" id="PS51900">
    <property type="entry name" value="CB"/>
    <property type="match status" value="1"/>
</dbReference>
<dbReference type="PROSITE" id="PS51898">
    <property type="entry name" value="TYR_RECOMBINASE"/>
    <property type="match status" value="1"/>
</dbReference>
<name>GP7D_CHLT2</name>
<protein>
    <recommendedName>
        <fullName>Virulence plasmid integrase pGP7-D</fullName>
    </recommendedName>
    <alternativeName>
        <fullName>Protein P-11</fullName>
    </alternativeName>
</protein>
<geneLocation type="plasmid">
    <name>pL2</name>
</geneLocation>
<geneLocation type="plasmid">
    <name>pLGV440</name>
</geneLocation>